<organism>
    <name type="scientific">Lacticaseibacillus casei</name>
    <name type="common">Lactobacillus casei</name>
    <dbReference type="NCBI Taxonomy" id="1582"/>
    <lineage>
        <taxon>Bacteria</taxon>
        <taxon>Bacillati</taxon>
        <taxon>Bacillota</taxon>
        <taxon>Bacilli</taxon>
        <taxon>Lactobacillales</taxon>
        <taxon>Lactobacillaceae</taxon>
        <taxon>Lacticaseibacillus</taxon>
    </lineage>
</organism>
<name>IOLE_LACCA</name>
<comment type="function">
    <text evidence="1">Catalyzes the dehydration of inosose (2-keto-myo-inositol, 2KMI or 2,4,6/3,5-pentahydroxycyclohexanone) to 3D-(3,5/4)-trihydroxycyclohexane-1,2-dione (D-2,3-diketo-4-deoxy-epi-inositol).</text>
</comment>
<comment type="catalytic activity">
    <reaction evidence="1">
        <text>scyllo-inosose = 3D-3,5/4-trihydroxycyclohexane-1,2-dione + H2O</text>
        <dbReference type="Rhea" id="RHEA:14065"/>
        <dbReference type="ChEBI" id="CHEBI:15377"/>
        <dbReference type="ChEBI" id="CHEBI:17811"/>
        <dbReference type="ChEBI" id="CHEBI:28446"/>
        <dbReference type="EC" id="4.2.1.44"/>
    </reaction>
</comment>
<comment type="cofactor">
    <cofactor evidence="1">
        <name>glutathione</name>
        <dbReference type="ChEBI" id="CHEBI:57925"/>
    </cofactor>
</comment>
<comment type="cofactor">
    <cofactor evidence="1">
        <name>Co(2+)</name>
        <dbReference type="ChEBI" id="CHEBI:48828"/>
    </cofactor>
    <cofactor evidence="1">
        <name>Mn(2+)</name>
        <dbReference type="ChEBI" id="CHEBI:29035"/>
    </cofactor>
</comment>
<comment type="pathway">
    <text evidence="1">Polyol metabolism; myo-inositol degradation into acetyl-CoA; acetyl-CoA from myo-inositol: step 2/7.</text>
</comment>
<comment type="similarity">
    <text evidence="1">Belongs to the IolE/MocC family.</text>
</comment>
<dbReference type="EC" id="4.2.1.44" evidence="1"/>
<dbReference type="EMBL" id="EF382358">
    <property type="protein sequence ID" value="ABP57768.1"/>
    <property type="molecule type" value="Genomic_DNA"/>
</dbReference>
<dbReference type="SMR" id="A5YBJ9"/>
<dbReference type="STRING" id="1582.AAW28_06885"/>
<dbReference type="eggNOG" id="COG1082">
    <property type="taxonomic scope" value="Bacteria"/>
</dbReference>
<dbReference type="OMA" id="WRDDKTA"/>
<dbReference type="UniPathway" id="UPA00076">
    <property type="reaction ID" value="UER00144"/>
</dbReference>
<dbReference type="GO" id="GO:0030145">
    <property type="term" value="F:manganese ion binding"/>
    <property type="evidence" value="ECO:0007669"/>
    <property type="project" value="UniProtKB-UniRule"/>
</dbReference>
<dbReference type="GO" id="GO:0050114">
    <property type="term" value="F:myo-inosose-2 dehydratase activity"/>
    <property type="evidence" value="ECO:0007669"/>
    <property type="project" value="UniProtKB-UniRule"/>
</dbReference>
<dbReference type="GO" id="GO:0019310">
    <property type="term" value="P:inositol catabolic process"/>
    <property type="evidence" value="ECO:0007669"/>
    <property type="project" value="UniProtKB-UniRule"/>
</dbReference>
<dbReference type="Gene3D" id="3.20.20.150">
    <property type="entry name" value="Divalent-metal-dependent TIM barrel enzymes"/>
    <property type="match status" value="1"/>
</dbReference>
<dbReference type="HAMAP" id="MF_01672">
    <property type="entry name" value="IolE"/>
    <property type="match status" value="1"/>
</dbReference>
<dbReference type="InterPro" id="IPR023952">
    <property type="entry name" value="IolE"/>
</dbReference>
<dbReference type="InterPro" id="IPR030823">
    <property type="entry name" value="IolE/MocC"/>
</dbReference>
<dbReference type="InterPro" id="IPR050312">
    <property type="entry name" value="IolE/XylAMocC-like"/>
</dbReference>
<dbReference type="InterPro" id="IPR036237">
    <property type="entry name" value="Xyl_isomerase-like_sf"/>
</dbReference>
<dbReference type="InterPro" id="IPR013022">
    <property type="entry name" value="Xyl_isomerase-like_TIM-brl"/>
</dbReference>
<dbReference type="NCBIfam" id="TIGR04379">
    <property type="entry name" value="myo_inos_iolE"/>
    <property type="match status" value="1"/>
</dbReference>
<dbReference type="PANTHER" id="PTHR12110">
    <property type="entry name" value="HYDROXYPYRUVATE ISOMERASE"/>
    <property type="match status" value="1"/>
</dbReference>
<dbReference type="PANTHER" id="PTHR12110:SF41">
    <property type="entry name" value="INOSOSE DEHYDRATASE"/>
    <property type="match status" value="1"/>
</dbReference>
<dbReference type="Pfam" id="PF01261">
    <property type="entry name" value="AP_endonuc_2"/>
    <property type="match status" value="1"/>
</dbReference>
<dbReference type="SUPFAM" id="SSF51658">
    <property type="entry name" value="Xylose isomerase-like"/>
    <property type="match status" value="1"/>
</dbReference>
<reference key="1">
    <citation type="journal article" date="2007" name="Appl. Environ. Microbiol.">
        <title>Identification of a gene cluster allowing Lactobacillus casei BL23 the utilization of myo-inositol.</title>
        <authorList>
            <person name="Yebra M.J."/>
            <person name="Zuniga M."/>
            <person name="Beaufils S."/>
            <person name="Perez-Martinez G."/>
            <person name="Deutscher J."/>
            <person name="Monedero V."/>
        </authorList>
    </citation>
    <scope>NUCLEOTIDE SEQUENCE [GENOMIC DNA]</scope>
    <source>
        <strain>BL23</strain>
    </source>
</reference>
<accession>A5YBJ9</accession>
<evidence type="ECO:0000255" key="1">
    <source>
        <dbReference type="HAMAP-Rule" id="MF_01672"/>
    </source>
</evidence>
<proteinExistence type="inferred from homology"/>
<keyword id="KW-0170">Cobalt</keyword>
<keyword id="KW-0456">Lyase</keyword>
<keyword id="KW-0464">Manganese</keyword>
<protein>
    <recommendedName>
        <fullName evidence="1">Inosose dehydratase</fullName>
        <ecNumber evidence="1">4.2.1.44</ecNumber>
    </recommendedName>
    <alternativeName>
        <fullName evidence="1">2-keto-myo-inositol dehydratase</fullName>
        <shortName evidence="1">2KMI dehydratase</shortName>
    </alternativeName>
</protein>
<gene>
    <name evidence="1" type="primary">iolE</name>
</gene>
<feature type="chain" id="PRO_0000352372" description="Inosose dehydratase">
    <location>
        <begin position="1"/>
        <end position="298"/>
    </location>
</feature>
<sequence>MTIELGIAPIGWTNDDMPELGKEVTFEQAIDEMTLAGYKGTEVGNKYPKDPKTLKHFLDLRHLKIASAWFSAFLTTKPYEETEAAFIKHRDFLHAMGAKVIVVAEQGHSVQGLLDKSVFDDKPHFTDDEWERLATGLERLGDRAREVGMQIVYHHHMGTGVQTTAEIDRLMTMTDPDKVSLLFDTGHLVLSGEDPLTIFNRYQDRIKHIHFKDVRQQQADEEHKDHLSFLAGVKNGMFTVPGDGMIDFKPIWEAIQESGYDGWIIVEAEQDPAKANPFEYALKAKKYLDATMNIPQSA</sequence>